<keyword id="KW-0119">Carbohydrate metabolism</keyword>
<keyword id="KW-0961">Cell wall biogenesis/degradation</keyword>
<keyword id="KW-0136">Cellulose degradation</keyword>
<keyword id="KW-0325">Glycoprotein</keyword>
<keyword id="KW-0326">Glycosidase</keyword>
<keyword id="KW-0378">Hydrolase</keyword>
<keyword id="KW-0624">Polysaccharide degradation</keyword>
<keyword id="KW-1185">Reference proteome</keyword>
<keyword id="KW-0964">Secreted</keyword>
<keyword id="KW-0732">Signal</keyword>
<dbReference type="EC" id="3.2.1.4"/>
<dbReference type="EMBL" id="AC066689">
    <property type="protein sequence ID" value="AAG51703.1"/>
    <property type="molecule type" value="Genomic_DNA"/>
</dbReference>
<dbReference type="EMBL" id="CP002684">
    <property type="protein sequence ID" value="AEE34236.1"/>
    <property type="molecule type" value="Genomic_DNA"/>
</dbReference>
<dbReference type="EMBL" id="AF372940">
    <property type="protein sequence ID" value="AAK50080.1"/>
    <property type="molecule type" value="mRNA"/>
</dbReference>
<dbReference type="EMBL" id="AY143945">
    <property type="protein sequence ID" value="AAN28884.1"/>
    <property type="molecule type" value="mRNA"/>
</dbReference>
<dbReference type="EMBL" id="BT000696">
    <property type="protein sequence ID" value="AAN31840.1"/>
    <property type="molecule type" value="mRNA"/>
</dbReference>
<dbReference type="EMBL" id="Z25957">
    <property type="protein sequence ID" value="CAA81116.1"/>
    <property type="molecule type" value="mRNA"/>
</dbReference>
<dbReference type="PIR" id="A96668">
    <property type="entry name" value="A96668"/>
</dbReference>
<dbReference type="RefSeq" id="NP_176621.1">
    <property type="nucleotide sequence ID" value="NM_105114.3"/>
</dbReference>
<dbReference type="SMR" id="Q42059"/>
<dbReference type="FunCoup" id="Q42059">
    <property type="interactions" value="216"/>
</dbReference>
<dbReference type="STRING" id="3702.Q42059"/>
<dbReference type="CAZy" id="CBM49">
    <property type="family name" value="Carbohydrate-Binding Module Family 49"/>
</dbReference>
<dbReference type="CAZy" id="GH9">
    <property type="family name" value="Glycoside Hydrolase Family 9"/>
</dbReference>
<dbReference type="GlyGen" id="Q42059">
    <property type="glycosylation" value="2 sites"/>
</dbReference>
<dbReference type="iPTMnet" id="Q42059"/>
<dbReference type="PaxDb" id="3702-AT1G64390.1"/>
<dbReference type="ProteomicsDB" id="247247"/>
<dbReference type="EnsemblPlants" id="AT1G64390.1">
    <property type="protein sequence ID" value="AT1G64390.1"/>
    <property type="gene ID" value="AT1G64390"/>
</dbReference>
<dbReference type="GeneID" id="842747"/>
<dbReference type="Gramene" id="AT1G64390.1">
    <property type="protein sequence ID" value="AT1G64390.1"/>
    <property type="gene ID" value="AT1G64390"/>
</dbReference>
<dbReference type="KEGG" id="ath:AT1G64390"/>
<dbReference type="Araport" id="AT1G64390"/>
<dbReference type="TAIR" id="AT1G64390">
    <property type="gene designation" value="GH9C2"/>
</dbReference>
<dbReference type="eggNOG" id="ENOG502QRF6">
    <property type="taxonomic scope" value="Eukaryota"/>
</dbReference>
<dbReference type="HOGENOM" id="CLU_008926_1_4_1"/>
<dbReference type="InParanoid" id="Q42059"/>
<dbReference type="OMA" id="QGRLWGL"/>
<dbReference type="OrthoDB" id="1043538at2759"/>
<dbReference type="PhylomeDB" id="Q42059"/>
<dbReference type="BioCyc" id="ARA:AT1G64390-MONOMER"/>
<dbReference type="PRO" id="PR:Q42059"/>
<dbReference type="Proteomes" id="UP000006548">
    <property type="component" value="Chromosome 1"/>
</dbReference>
<dbReference type="ExpressionAtlas" id="Q42059">
    <property type="expression patterns" value="baseline and differential"/>
</dbReference>
<dbReference type="GO" id="GO:0005576">
    <property type="term" value="C:extracellular region"/>
    <property type="evidence" value="ECO:0007669"/>
    <property type="project" value="UniProtKB-SubCell"/>
</dbReference>
<dbReference type="GO" id="GO:0030246">
    <property type="term" value="F:carbohydrate binding"/>
    <property type="evidence" value="ECO:0007669"/>
    <property type="project" value="InterPro"/>
</dbReference>
<dbReference type="GO" id="GO:0008810">
    <property type="term" value="F:cellulase activity"/>
    <property type="evidence" value="ECO:0007669"/>
    <property type="project" value="UniProtKB-EC"/>
</dbReference>
<dbReference type="GO" id="GO:0071555">
    <property type="term" value="P:cell wall organization"/>
    <property type="evidence" value="ECO:0007669"/>
    <property type="project" value="UniProtKB-KW"/>
</dbReference>
<dbReference type="GO" id="GO:0030245">
    <property type="term" value="P:cellulose catabolic process"/>
    <property type="evidence" value="ECO:0007669"/>
    <property type="project" value="UniProtKB-KW"/>
</dbReference>
<dbReference type="FunFam" id="1.50.10.10:FF:000020">
    <property type="entry name" value="Endoglucanase"/>
    <property type="match status" value="1"/>
</dbReference>
<dbReference type="Gene3D" id="1.50.10.10">
    <property type="match status" value="1"/>
</dbReference>
<dbReference type="InterPro" id="IPR008928">
    <property type="entry name" value="6-hairpin_glycosidase_sf"/>
</dbReference>
<dbReference type="InterPro" id="IPR012341">
    <property type="entry name" value="6hp_glycosidase-like_sf"/>
</dbReference>
<dbReference type="InterPro" id="IPR019028">
    <property type="entry name" value="CBM_49"/>
</dbReference>
<dbReference type="InterPro" id="IPR001701">
    <property type="entry name" value="Glyco_hydro_9"/>
</dbReference>
<dbReference type="InterPro" id="IPR033126">
    <property type="entry name" value="Glyco_hydro_9_Asp/Glu_AS"/>
</dbReference>
<dbReference type="InterPro" id="IPR018221">
    <property type="entry name" value="Glyco_hydro_9_His_AS"/>
</dbReference>
<dbReference type="PANTHER" id="PTHR22298">
    <property type="entry name" value="ENDO-1,4-BETA-GLUCANASE"/>
    <property type="match status" value="1"/>
</dbReference>
<dbReference type="Pfam" id="PF09478">
    <property type="entry name" value="CBM49"/>
    <property type="match status" value="1"/>
</dbReference>
<dbReference type="Pfam" id="PF00759">
    <property type="entry name" value="Glyco_hydro_9"/>
    <property type="match status" value="1"/>
</dbReference>
<dbReference type="SMART" id="SM01063">
    <property type="entry name" value="CBM49"/>
    <property type="match status" value="1"/>
</dbReference>
<dbReference type="SUPFAM" id="SSF48208">
    <property type="entry name" value="Six-hairpin glycosidases"/>
    <property type="match status" value="1"/>
</dbReference>
<dbReference type="PROSITE" id="PS60032">
    <property type="entry name" value="GH9_1"/>
    <property type="match status" value="1"/>
</dbReference>
<dbReference type="PROSITE" id="PS00592">
    <property type="entry name" value="GH9_2"/>
    <property type="match status" value="1"/>
</dbReference>
<dbReference type="PROSITE" id="PS00698">
    <property type="entry name" value="GH9_3"/>
    <property type="match status" value="1"/>
</dbReference>
<gene>
    <name type="ordered locus">At1g64390</name>
    <name type="ORF">F15H21.9</name>
</gene>
<feature type="signal peptide" evidence="2">
    <location>
        <begin position="1"/>
        <end position="22"/>
    </location>
</feature>
<feature type="chain" id="PRO_0000249259" description="Endoglucanase 6">
    <location>
        <begin position="23"/>
        <end position="620"/>
    </location>
</feature>
<feature type="active site" description="Nucleophile" evidence="5">
    <location>
        <position position="78"/>
    </location>
</feature>
<feature type="active site" evidence="3">
    <location>
        <position position="411"/>
    </location>
</feature>
<feature type="active site" evidence="4">
    <location>
        <position position="463"/>
    </location>
</feature>
<feature type="active site" evidence="4">
    <location>
        <position position="472"/>
    </location>
</feature>
<feature type="glycosylation site" description="N-linked (GlcNAc...) asparagine" evidence="2">
    <location>
        <position position="554"/>
    </location>
</feature>
<feature type="glycosylation site" description="N-linked (GlcNAc...) asparagine" evidence="2">
    <location>
        <position position="564"/>
    </location>
</feature>
<feature type="sequence conflict" description="In Ref. 3; AAN31840." evidence="6" ref="3">
    <original>R</original>
    <variation>K</variation>
    <location>
        <position position="196"/>
    </location>
</feature>
<feature type="sequence conflict" description="In Ref. 4; CAA81116." evidence="6" ref="4">
    <original>S</original>
    <variation>V</variation>
    <location>
        <position position="442"/>
    </location>
</feature>
<feature type="sequence conflict" description="In Ref. 4; CAA81116." evidence="6" ref="4">
    <original>MPIR</original>
    <variation>NAYS</variation>
    <location>
        <begin position="511"/>
        <end position="514"/>
    </location>
</feature>
<sequence length="620" mass="68592">MEKFAPVAALLLLLLCFPVAFSGHDYGQALSKSLLFFEAQRSGVLPRNQRVTWRSHSGLTDGKSSGVNLVGGYYDAGDNVKFGLPMAFTVTMMAWSVIEYGNQLQANGELGNSIDAIKWGTDYFIKAHPEPNVLYGEVGDGNTDHYCWQRPEEMTTDRKAYRIDPSNPGSDLAGETAAAMAAASIVFRRSNPVYSRLLLTHAYQLFDFADKYRGKYDSSITVAQKYYRSVSGYNDELLWAAAWLYQASNNQFYLDYLGRNGDAMGGTGWSMTEFGWDVKYAGVQTLVAKFLMQGKAGRHAPVFRKYQEKADSFMCSLLGKSSRNIQKTPGGLIFRQRWNNMQFVTSASFLTTVYSDYLTSSRSNLRCAAGNVAPSQLLSFAKSQVDYILGDNPRATSYMVGYGNNFPQRVHHRGSSIVSVKVDRTFVTCRGGYATWFSRKGSDPNLLTGAIVGGPDAYDNFADRRDNYEQTEPATYNNAPLLGVLARLSSGHSGYSQFLPVVPAPVVRRPMPIRRPKVTTPVRASGPVAIVQKITSSWVSKGRTYYRYSTTVINKSSRPLKSLNLSIKNLYGPIWGLSRSGNSFGLPSWMHSLPSGKSLEFVYIHSTTPANVAVSSYTLA</sequence>
<protein>
    <recommendedName>
        <fullName>Endoglucanase 6</fullName>
        <ecNumber>3.2.1.4</ecNumber>
    </recommendedName>
    <alternativeName>
        <fullName>Endo-1,4-beta glucanase 6</fullName>
    </alternativeName>
</protein>
<organism>
    <name type="scientific">Arabidopsis thaliana</name>
    <name type="common">Mouse-ear cress</name>
    <dbReference type="NCBI Taxonomy" id="3702"/>
    <lineage>
        <taxon>Eukaryota</taxon>
        <taxon>Viridiplantae</taxon>
        <taxon>Streptophyta</taxon>
        <taxon>Embryophyta</taxon>
        <taxon>Tracheophyta</taxon>
        <taxon>Spermatophyta</taxon>
        <taxon>Magnoliopsida</taxon>
        <taxon>eudicotyledons</taxon>
        <taxon>Gunneridae</taxon>
        <taxon>Pentapetalae</taxon>
        <taxon>rosids</taxon>
        <taxon>malvids</taxon>
        <taxon>Brassicales</taxon>
        <taxon>Brassicaceae</taxon>
        <taxon>Camelineae</taxon>
        <taxon>Arabidopsis</taxon>
    </lineage>
</organism>
<accession>Q42059</accession>
<accession>Q8H160</accession>
<accession>Q9C7W3</accession>
<comment type="catalytic activity">
    <reaction>
        <text>Endohydrolysis of (1-&gt;4)-beta-D-glucosidic linkages in cellulose, lichenin and cereal beta-D-glucans.</text>
        <dbReference type="EC" id="3.2.1.4"/>
    </reaction>
</comment>
<comment type="subcellular location">
    <subcellularLocation>
        <location evidence="1">Secreted</location>
    </subcellularLocation>
</comment>
<comment type="similarity">
    <text evidence="5 6">Belongs to the glycosyl hydrolase 9 (cellulase E) family.</text>
</comment>
<reference key="1">
    <citation type="journal article" date="2000" name="Nature">
        <title>Sequence and analysis of chromosome 1 of the plant Arabidopsis thaliana.</title>
        <authorList>
            <person name="Theologis A."/>
            <person name="Ecker J.R."/>
            <person name="Palm C.J."/>
            <person name="Federspiel N.A."/>
            <person name="Kaul S."/>
            <person name="White O."/>
            <person name="Alonso J."/>
            <person name="Altafi H."/>
            <person name="Araujo R."/>
            <person name="Bowman C.L."/>
            <person name="Brooks S.Y."/>
            <person name="Buehler E."/>
            <person name="Chan A."/>
            <person name="Chao Q."/>
            <person name="Chen H."/>
            <person name="Cheuk R.F."/>
            <person name="Chin C.W."/>
            <person name="Chung M.K."/>
            <person name="Conn L."/>
            <person name="Conway A.B."/>
            <person name="Conway A.R."/>
            <person name="Creasy T.H."/>
            <person name="Dewar K."/>
            <person name="Dunn P."/>
            <person name="Etgu P."/>
            <person name="Feldblyum T.V."/>
            <person name="Feng J.-D."/>
            <person name="Fong B."/>
            <person name="Fujii C.Y."/>
            <person name="Gill J.E."/>
            <person name="Goldsmith A.D."/>
            <person name="Haas B."/>
            <person name="Hansen N.F."/>
            <person name="Hughes B."/>
            <person name="Huizar L."/>
            <person name="Hunter J.L."/>
            <person name="Jenkins J."/>
            <person name="Johnson-Hopson C."/>
            <person name="Khan S."/>
            <person name="Khaykin E."/>
            <person name="Kim C.J."/>
            <person name="Koo H.L."/>
            <person name="Kremenetskaia I."/>
            <person name="Kurtz D.B."/>
            <person name="Kwan A."/>
            <person name="Lam B."/>
            <person name="Langin-Hooper S."/>
            <person name="Lee A."/>
            <person name="Lee J.M."/>
            <person name="Lenz C.A."/>
            <person name="Li J.H."/>
            <person name="Li Y.-P."/>
            <person name="Lin X."/>
            <person name="Liu S.X."/>
            <person name="Liu Z.A."/>
            <person name="Luros J.S."/>
            <person name="Maiti R."/>
            <person name="Marziali A."/>
            <person name="Militscher J."/>
            <person name="Miranda M."/>
            <person name="Nguyen M."/>
            <person name="Nierman W.C."/>
            <person name="Osborne B.I."/>
            <person name="Pai G."/>
            <person name="Peterson J."/>
            <person name="Pham P.K."/>
            <person name="Rizzo M."/>
            <person name="Rooney T."/>
            <person name="Rowley D."/>
            <person name="Sakano H."/>
            <person name="Salzberg S.L."/>
            <person name="Schwartz J.R."/>
            <person name="Shinn P."/>
            <person name="Southwick A.M."/>
            <person name="Sun H."/>
            <person name="Tallon L.J."/>
            <person name="Tambunga G."/>
            <person name="Toriumi M.J."/>
            <person name="Town C.D."/>
            <person name="Utterback T."/>
            <person name="Van Aken S."/>
            <person name="Vaysberg M."/>
            <person name="Vysotskaia V.S."/>
            <person name="Walker M."/>
            <person name="Wu D."/>
            <person name="Yu G."/>
            <person name="Fraser C.M."/>
            <person name="Venter J.C."/>
            <person name="Davis R.W."/>
        </authorList>
    </citation>
    <scope>NUCLEOTIDE SEQUENCE [LARGE SCALE GENOMIC DNA]</scope>
    <source>
        <strain>cv. Columbia</strain>
    </source>
</reference>
<reference key="2">
    <citation type="journal article" date="2017" name="Plant J.">
        <title>Araport11: a complete reannotation of the Arabidopsis thaliana reference genome.</title>
        <authorList>
            <person name="Cheng C.Y."/>
            <person name="Krishnakumar V."/>
            <person name="Chan A.P."/>
            <person name="Thibaud-Nissen F."/>
            <person name="Schobel S."/>
            <person name="Town C.D."/>
        </authorList>
    </citation>
    <scope>GENOME REANNOTATION</scope>
    <source>
        <strain>cv. Columbia</strain>
    </source>
</reference>
<reference key="3">
    <citation type="journal article" date="2003" name="Science">
        <title>Empirical analysis of transcriptional activity in the Arabidopsis genome.</title>
        <authorList>
            <person name="Yamada K."/>
            <person name="Lim J."/>
            <person name="Dale J.M."/>
            <person name="Chen H."/>
            <person name="Shinn P."/>
            <person name="Palm C.J."/>
            <person name="Southwick A.M."/>
            <person name="Wu H.C."/>
            <person name="Kim C.J."/>
            <person name="Nguyen M."/>
            <person name="Pham P.K."/>
            <person name="Cheuk R.F."/>
            <person name="Karlin-Newmann G."/>
            <person name="Liu S.X."/>
            <person name="Lam B."/>
            <person name="Sakano H."/>
            <person name="Wu T."/>
            <person name="Yu G."/>
            <person name="Miranda M."/>
            <person name="Quach H.L."/>
            <person name="Tripp M."/>
            <person name="Chang C.H."/>
            <person name="Lee J.M."/>
            <person name="Toriumi M.J."/>
            <person name="Chan M.M."/>
            <person name="Tang C.C."/>
            <person name="Onodera C.S."/>
            <person name="Deng J.M."/>
            <person name="Akiyama K."/>
            <person name="Ansari Y."/>
            <person name="Arakawa T."/>
            <person name="Banh J."/>
            <person name="Banno F."/>
            <person name="Bowser L."/>
            <person name="Brooks S.Y."/>
            <person name="Carninci P."/>
            <person name="Chao Q."/>
            <person name="Choy N."/>
            <person name="Enju A."/>
            <person name="Goldsmith A.D."/>
            <person name="Gurjal M."/>
            <person name="Hansen N.F."/>
            <person name="Hayashizaki Y."/>
            <person name="Johnson-Hopson C."/>
            <person name="Hsuan V.W."/>
            <person name="Iida K."/>
            <person name="Karnes M."/>
            <person name="Khan S."/>
            <person name="Koesema E."/>
            <person name="Ishida J."/>
            <person name="Jiang P.X."/>
            <person name="Jones T."/>
            <person name="Kawai J."/>
            <person name="Kamiya A."/>
            <person name="Meyers C."/>
            <person name="Nakajima M."/>
            <person name="Narusaka M."/>
            <person name="Seki M."/>
            <person name="Sakurai T."/>
            <person name="Satou M."/>
            <person name="Tamse R."/>
            <person name="Vaysberg M."/>
            <person name="Wallender E.K."/>
            <person name="Wong C."/>
            <person name="Yamamura Y."/>
            <person name="Yuan S."/>
            <person name="Shinozaki K."/>
            <person name="Davis R.W."/>
            <person name="Theologis A."/>
            <person name="Ecker J.R."/>
        </authorList>
    </citation>
    <scope>NUCLEOTIDE SEQUENCE [LARGE SCALE MRNA]</scope>
    <source>
        <strain>cv. Columbia</strain>
    </source>
</reference>
<reference key="4">
    <citation type="journal article" date="1996" name="Plant J.">
        <title>Further progress towards a catalogue of all Arabidopsis genes: analysis of a set of 5000 non-redundant ESTs.</title>
        <authorList>
            <person name="Cooke R."/>
            <person name="Raynal M."/>
            <person name="Laudie M."/>
            <person name="Grellet F."/>
            <person name="Delseny M."/>
            <person name="Morris P.-C."/>
            <person name="Guerrier D."/>
            <person name="Giraudat J."/>
            <person name="Quigley F."/>
            <person name="Clabault G."/>
            <person name="Li Y.-F."/>
            <person name="Mache R."/>
            <person name="Krivitzky M."/>
            <person name="Gy I.J.-J."/>
            <person name="Kreis M."/>
            <person name="Lecharny A."/>
            <person name="Parmentier Y."/>
            <person name="Marbach J."/>
            <person name="Fleck J."/>
            <person name="Clement B."/>
            <person name="Philipps G."/>
            <person name="Herve C."/>
            <person name="Bardet C."/>
            <person name="Tremousaygue D."/>
            <person name="Lescure B."/>
            <person name="Lacomme C."/>
            <person name="Roby D."/>
            <person name="Jourjon M.-F."/>
            <person name="Chabrier P."/>
            <person name="Charpenteau J.-L."/>
            <person name="Desprez T."/>
            <person name="Amselem J."/>
            <person name="Chiapello H."/>
            <person name="Hoefte H."/>
        </authorList>
    </citation>
    <scope>NUCLEOTIDE SEQUENCE [LARGE SCALE MRNA] OF 397-514</scope>
    <source>
        <strain>cv. Columbia</strain>
        <tissue>Shoot</tissue>
    </source>
</reference>
<reference key="5">
    <citation type="journal article" date="2004" name="J. Mol. Evol.">
        <title>Phylogenetic analysis of the plant endo-beta-1,4-glucanase gene family.</title>
        <authorList>
            <person name="Libertini E."/>
            <person name="Li Y."/>
            <person name="McQueen-Mason S.J."/>
        </authorList>
    </citation>
    <scope>GENE FAMILY</scope>
</reference>
<proteinExistence type="evidence at transcript level"/>
<name>GUN6_ARATH</name>
<evidence type="ECO:0000250" key="1"/>
<evidence type="ECO:0000255" key="2"/>
<evidence type="ECO:0000255" key="3">
    <source>
        <dbReference type="PROSITE-ProRule" id="PRU10059"/>
    </source>
</evidence>
<evidence type="ECO:0000255" key="4">
    <source>
        <dbReference type="PROSITE-ProRule" id="PRU10060"/>
    </source>
</evidence>
<evidence type="ECO:0000255" key="5">
    <source>
        <dbReference type="PROSITE-ProRule" id="PRU10140"/>
    </source>
</evidence>
<evidence type="ECO:0000305" key="6"/>